<evidence type="ECO:0000256" key="1">
    <source>
        <dbReference type="SAM" id="MobiDB-lite"/>
    </source>
</evidence>
<reference key="1">
    <citation type="journal article" date="1990" name="Infect. Immun.">
        <title>Molecular analysis of a sphingomyelinase C gene from Leptospira interrogans serovar hardjo.</title>
        <authorList>
            <person name="Segers R.P.A.M."/>
            <person name="van der Drift A."/>
            <person name="de Nijs A."/>
            <person name="Corcione P."/>
            <person name="van der Zeijst B.A.M."/>
            <person name="Gaastra W."/>
        </authorList>
    </citation>
    <scope>NUCLEOTIDE SEQUENCE [GENOMIC DNA]</scope>
    <source>
        <strain>Sponselee / Serogroup Sejroe / Serovar hardjo</strain>
    </source>
</reference>
<accession>P24845</accession>
<organism>
    <name type="scientific">Leptospira interrogans</name>
    <dbReference type="NCBI Taxonomy" id="173"/>
    <lineage>
        <taxon>Bacteria</taxon>
        <taxon>Pseudomonadati</taxon>
        <taxon>Spirochaetota</taxon>
        <taxon>Spirochaetia</taxon>
        <taxon>Leptospirales</taxon>
        <taxon>Leptospiraceae</taxon>
        <taxon>Leptospira</taxon>
    </lineage>
</organism>
<name>YSP2_LEPIR</name>
<sequence length="196" mass="22455">DPQKEELIEHSLNKQTGSNFGQKTELEKVWVDTSSEDISNSYFEIKPLNLSGSREKSLFKTLKEDRLDAKSAQENLNILKEIQQQIIKNVSQKKQAPLNELYLKDLENISNQLGNSEPIKLSEIEKKQEPIERKTSTTTNTESNQEKPLRLGNKTIQLKDGTILKGNAMQYGSQYILEENEKKRIIESTNIESISF</sequence>
<feature type="chain" id="PRO_0000066507" description="Uncharacterized protein in sph 3'region">
    <location>
        <begin position="1" status="less than"/>
        <end position="196"/>
    </location>
</feature>
<feature type="region of interest" description="Disordered" evidence="1">
    <location>
        <begin position="122"/>
        <end position="150"/>
    </location>
</feature>
<feature type="compositionally biased region" description="Basic and acidic residues" evidence="1">
    <location>
        <begin position="122"/>
        <end position="135"/>
    </location>
</feature>
<feature type="non-terminal residue">
    <location>
        <position position="1"/>
    </location>
</feature>
<proteinExistence type="predicted"/>
<dbReference type="EMBL" id="X52176">
    <property type="protein sequence ID" value="CAA36426.1"/>
    <property type="molecule type" value="Genomic_DNA"/>
</dbReference>
<dbReference type="PIR" id="S22636">
    <property type="entry name" value="S22636"/>
</dbReference>
<dbReference type="SMR" id="P24845"/>
<protein>
    <recommendedName>
        <fullName>Uncharacterized protein in sph 3'region</fullName>
    </recommendedName>
    <alternativeName>
        <fullName>ORF 2</fullName>
    </alternativeName>
</protein>